<gene>
    <name evidence="1" type="primary">tig</name>
    <name type="ordered locus">Paes_1954</name>
</gene>
<proteinExistence type="inferred from homology"/>
<reference key="1">
    <citation type="submission" date="2008-06" db="EMBL/GenBank/DDBJ databases">
        <title>Complete sequence of chromosome of Prosthecochloris aestuarii DSM 271.</title>
        <authorList>
            <consortium name="US DOE Joint Genome Institute"/>
            <person name="Lucas S."/>
            <person name="Copeland A."/>
            <person name="Lapidus A."/>
            <person name="Glavina del Rio T."/>
            <person name="Dalin E."/>
            <person name="Tice H."/>
            <person name="Bruce D."/>
            <person name="Goodwin L."/>
            <person name="Pitluck S."/>
            <person name="Schmutz J."/>
            <person name="Larimer F."/>
            <person name="Land M."/>
            <person name="Hauser L."/>
            <person name="Kyrpides N."/>
            <person name="Anderson I."/>
            <person name="Liu Z."/>
            <person name="Li T."/>
            <person name="Zhao F."/>
            <person name="Overmann J."/>
            <person name="Bryant D.A."/>
            <person name="Richardson P."/>
        </authorList>
    </citation>
    <scope>NUCLEOTIDE SEQUENCE [LARGE SCALE GENOMIC DNA]</scope>
    <source>
        <strain>DSM 271 / SK 413</strain>
    </source>
</reference>
<evidence type="ECO:0000255" key="1">
    <source>
        <dbReference type="HAMAP-Rule" id="MF_00303"/>
    </source>
</evidence>
<organism>
    <name type="scientific">Prosthecochloris aestuarii (strain DSM 271 / SK 413)</name>
    <dbReference type="NCBI Taxonomy" id="290512"/>
    <lineage>
        <taxon>Bacteria</taxon>
        <taxon>Pseudomonadati</taxon>
        <taxon>Chlorobiota</taxon>
        <taxon>Chlorobiia</taxon>
        <taxon>Chlorobiales</taxon>
        <taxon>Chlorobiaceae</taxon>
        <taxon>Prosthecochloris</taxon>
    </lineage>
</organism>
<feature type="chain" id="PRO_1000115565" description="Trigger factor">
    <location>
        <begin position="1"/>
        <end position="428"/>
    </location>
</feature>
<feature type="domain" description="PPIase FKBP-type" evidence="1">
    <location>
        <begin position="165"/>
        <end position="240"/>
    </location>
</feature>
<accession>B4S4S0</accession>
<protein>
    <recommendedName>
        <fullName evidence="1">Trigger factor</fullName>
        <shortName evidence="1">TF</shortName>
        <ecNumber evidence="1">5.2.1.8</ecNumber>
    </recommendedName>
    <alternativeName>
        <fullName evidence="1">PPIase</fullName>
    </alternativeName>
</protein>
<name>TIG_PROA2</name>
<sequence length="428" mass="48496">MQHTIKNVSETEQQLEIILSAEEFNPEVELEIQDAKKNIQIKGFRKGHVPVGLIKKLMGPAIEASVAEKLASKYFGEIAEKETIKPASRAQLDNFSFNDDQLTITLSYEIHPEFELKDFSGYSFVEDLYTVSDEDVQNEINLILKGHGTLVSVDEAATSNDTVIADLIKLDAEGKEIEEQKTENHHFNLEYLPEDNPFKKALTGAKAEETVNVDIEPKEEGEEKVSYEISVKEVKRMELPELTDELLKEITQEKFDSIDAFTQDVRQQLEEHFSGKSEQDLLESISSKLIEENPVATPSAMVDSFENMLIENAKRQFGGNFPAGFDDTELRASMRPNAVKHAQWMLISQKIAETNNLEVTDEDIKAYAEKEAEKNPSVKAEELINTYMSTEFKDYMIDTILKDKIYGIIKSSVTIQGENKAIPKHNHR</sequence>
<dbReference type="EC" id="5.2.1.8" evidence="1"/>
<dbReference type="EMBL" id="CP001108">
    <property type="protein sequence ID" value="ACF46966.1"/>
    <property type="molecule type" value="Genomic_DNA"/>
</dbReference>
<dbReference type="RefSeq" id="WP_012506499.1">
    <property type="nucleotide sequence ID" value="NC_011059.1"/>
</dbReference>
<dbReference type="SMR" id="B4S4S0"/>
<dbReference type="STRING" id="290512.Paes_1954"/>
<dbReference type="KEGG" id="paa:Paes_1954"/>
<dbReference type="eggNOG" id="COG0544">
    <property type="taxonomic scope" value="Bacteria"/>
</dbReference>
<dbReference type="HOGENOM" id="CLU_033058_3_1_10"/>
<dbReference type="Proteomes" id="UP000002725">
    <property type="component" value="Chromosome"/>
</dbReference>
<dbReference type="GO" id="GO:0005737">
    <property type="term" value="C:cytoplasm"/>
    <property type="evidence" value="ECO:0007669"/>
    <property type="project" value="UniProtKB-SubCell"/>
</dbReference>
<dbReference type="GO" id="GO:0003755">
    <property type="term" value="F:peptidyl-prolyl cis-trans isomerase activity"/>
    <property type="evidence" value="ECO:0007669"/>
    <property type="project" value="UniProtKB-UniRule"/>
</dbReference>
<dbReference type="GO" id="GO:0051301">
    <property type="term" value="P:cell division"/>
    <property type="evidence" value="ECO:0007669"/>
    <property type="project" value="UniProtKB-KW"/>
</dbReference>
<dbReference type="GO" id="GO:0006457">
    <property type="term" value="P:protein folding"/>
    <property type="evidence" value="ECO:0007669"/>
    <property type="project" value="UniProtKB-UniRule"/>
</dbReference>
<dbReference type="GO" id="GO:0015031">
    <property type="term" value="P:protein transport"/>
    <property type="evidence" value="ECO:0007669"/>
    <property type="project" value="UniProtKB-UniRule"/>
</dbReference>
<dbReference type="Gene3D" id="3.10.50.40">
    <property type="match status" value="1"/>
</dbReference>
<dbReference type="Gene3D" id="3.30.70.1050">
    <property type="entry name" value="Trigger factor ribosome-binding domain"/>
    <property type="match status" value="1"/>
</dbReference>
<dbReference type="Gene3D" id="1.10.3120.10">
    <property type="entry name" value="Trigger factor, C-terminal domain"/>
    <property type="match status" value="1"/>
</dbReference>
<dbReference type="HAMAP" id="MF_00303">
    <property type="entry name" value="Trigger_factor_Tig"/>
    <property type="match status" value="1"/>
</dbReference>
<dbReference type="InterPro" id="IPR046357">
    <property type="entry name" value="PPIase_dom_sf"/>
</dbReference>
<dbReference type="InterPro" id="IPR005215">
    <property type="entry name" value="Trig_fac"/>
</dbReference>
<dbReference type="InterPro" id="IPR008880">
    <property type="entry name" value="Trigger_fac_C"/>
</dbReference>
<dbReference type="InterPro" id="IPR037041">
    <property type="entry name" value="Trigger_fac_C_sf"/>
</dbReference>
<dbReference type="InterPro" id="IPR008881">
    <property type="entry name" value="Trigger_fac_ribosome-bd_bac"/>
</dbReference>
<dbReference type="InterPro" id="IPR036611">
    <property type="entry name" value="Trigger_fac_ribosome-bd_sf"/>
</dbReference>
<dbReference type="InterPro" id="IPR027304">
    <property type="entry name" value="Trigger_fact/SurA_dom_sf"/>
</dbReference>
<dbReference type="NCBIfam" id="TIGR00115">
    <property type="entry name" value="tig"/>
    <property type="match status" value="1"/>
</dbReference>
<dbReference type="Pfam" id="PF05698">
    <property type="entry name" value="Trigger_C"/>
    <property type="match status" value="1"/>
</dbReference>
<dbReference type="Pfam" id="PF05697">
    <property type="entry name" value="Trigger_N"/>
    <property type="match status" value="1"/>
</dbReference>
<dbReference type="PIRSF" id="PIRSF003095">
    <property type="entry name" value="Trigger_factor"/>
    <property type="match status" value="1"/>
</dbReference>
<dbReference type="SUPFAM" id="SSF54534">
    <property type="entry name" value="FKBP-like"/>
    <property type="match status" value="1"/>
</dbReference>
<dbReference type="SUPFAM" id="SSF109998">
    <property type="entry name" value="Triger factor/SurA peptide-binding domain-like"/>
    <property type="match status" value="1"/>
</dbReference>
<dbReference type="SUPFAM" id="SSF102735">
    <property type="entry name" value="Trigger factor ribosome-binding domain"/>
    <property type="match status" value="1"/>
</dbReference>
<keyword id="KW-0131">Cell cycle</keyword>
<keyword id="KW-0132">Cell division</keyword>
<keyword id="KW-0143">Chaperone</keyword>
<keyword id="KW-0963">Cytoplasm</keyword>
<keyword id="KW-0413">Isomerase</keyword>
<keyword id="KW-0697">Rotamase</keyword>
<comment type="function">
    <text evidence="1">Involved in protein export. Acts as a chaperone by maintaining the newly synthesized protein in an open conformation. Functions as a peptidyl-prolyl cis-trans isomerase.</text>
</comment>
<comment type="catalytic activity">
    <reaction evidence="1">
        <text>[protein]-peptidylproline (omega=180) = [protein]-peptidylproline (omega=0)</text>
        <dbReference type="Rhea" id="RHEA:16237"/>
        <dbReference type="Rhea" id="RHEA-COMP:10747"/>
        <dbReference type="Rhea" id="RHEA-COMP:10748"/>
        <dbReference type="ChEBI" id="CHEBI:83833"/>
        <dbReference type="ChEBI" id="CHEBI:83834"/>
        <dbReference type="EC" id="5.2.1.8"/>
    </reaction>
</comment>
<comment type="subcellular location">
    <subcellularLocation>
        <location>Cytoplasm</location>
    </subcellularLocation>
    <text evidence="1">About half TF is bound to the ribosome near the polypeptide exit tunnel while the other half is free in the cytoplasm.</text>
</comment>
<comment type="domain">
    <text evidence="1">Consists of 3 domains; the N-terminus binds the ribosome, the middle domain has PPIase activity, while the C-terminus has intrinsic chaperone activity on its own.</text>
</comment>
<comment type="similarity">
    <text evidence="1">Belongs to the FKBP-type PPIase family. Tig subfamily.</text>
</comment>